<proteinExistence type="inferred from homology"/>
<comment type="function">
    <text evidence="1">Forms part of the ribosomal stalk, playing a central role in the interaction of the ribosome with GTP-bound translation factors.</text>
</comment>
<comment type="subunit">
    <text evidence="1">Part of the ribosomal stalk of the 50S ribosomal subunit. The N-terminus interacts with L11 and the large rRNA to form the base of the stalk. The C-terminus forms an elongated spine to which L12 dimers bind in a sequential fashion forming a multimeric L10(L12)X complex.</text>
</comment>
<comment type="similarity">
    <text evidence="1">Belongs to the universal ribosomal protein uL10 family.</text>
</comment>
<organism>
    <name type="scientific">Shewanella amazonensis (strain ATCC BAA-1098 / SB2B)</name>
    <dbReference type="NCBI Taxonomy" id="326297"/>
    <lineage>
        <taxon>Bacteria</taxon>
        <taxon>Pseudomonadati</taxon>
        <taxon>Pseudomonadota</taxon>
        <taxon>Gammaproteobacteria</taxon>
        <taxon>Alteromonadales</taxon>
        <taxon>Shewanellaceae</taxon>
        <taxon>Shewanella</taxon>
    </lineage>
</organism>
<gene>
    <name evidence="1" type="primary">rplJ</name>
    <name type="ordered locus">Sama_0204</name>
</gene>
<dbReference type="EMBL" id="CP000507">
    <property type="protein sequence ID" value="ABL98415.1"/>
    <property type="molecule type" value="Genomic_DNA"/>
</dbReference>
<dbReference type="RefSeq" id="WP_011758326.1">
    <property type="nucleotide sequence ID" value="NC_008700.1"/>
</dbReference>
<dbReference type="STRING" id="326297.Sama_0204"/>
<dbReference type="KEGG" id="saz:Sama_0204"/>
<dbReference type="eggNOG" id="COG0244">
    <property type="taxonomic scope" value="Bacteria"/>
</dbReference>
<dbReference type="HOGENOM" id="CLU_092227_0_2_6"/>
<dbReference type="OrthoDB" id="9808307at2"/>
<dbReference type="Proteomes" id="UP000009175">
    <property type="component" value="Chromosome"/>
</dbReference>
<dbReference type="GO" id="GO:0015934">
    <property type="term" value="C:large ribosomal subunit"/>
    <property type="evidence" value="ECO:0007669"/>
    <property type="project" value="InterPro"/>
</dbReference>
<dbReference type="GO" id="GO:0070180">
    <property type="term" value="F:large ribosomal subunit rRNA binding"/>
    <property type="evidence" value="ECO:0007669"/>
    <property type="project" value="UniProtKB-UniRule"/>
</dbReference>
<dbReference type="GO" id="GO:0003735">
    <property type="term" value="F:structural constituent of ribosome"/>
    <property type="evidence" value="ECO:0007669"/>
    <property type="project" value="InterPro"/>
</dbReference>
<dbReference type="GO" id="GO:0006412">
    <property type="term" value="P:translation"/>
    <property type="evidence" value="ECO:0007669"/>
    <property type="project" value="UniProtKB-UniRule"/>
</dbReference>
<dbReference type="CDD" id="cd05797">
    <property type="entry name" value="Ribosomal_L10"/>
    <property type="match status" value="1"/>
</dbReference>
<dbReference type="FunFam" id="3.30.70.1730:FF:000001">
    <property type="entry name" value="50S ribosomal protein L10"/>
    <property type="match status" value="1"/>
</dbReference>
<dbReference type="Gene3D" id="3.30.70.1730">
    <property type="match status" value="1"/>
</dbReference>
<dbReference type="Gene3D" id="6.10.250.2350">
    <property type="match status" value="1"/>
</dbReference>
<dbReference type="HAMAP" id="MF_00362">
    <property type="entry name" value="Ribosomal_uL10"/>
    <property type="match status" value="1"/>
</dbReference>
<dbReference type="InterPro" id="IPR001790">
    <property type="entry name" value="Ribosomal_uL10"/>
</dbReference>
<dbReference type="InterPro" id="IPR043141">
    <property type="entry name" value="Ribosomal_uL10-like_sf"/>
</dbReference>
<dbReference type="InterPro" id="IPR022973">
    <property type="entry name" value="Ribosomal_uL10_bac"/>
</dbReference>
<dbReference type="InterPro" id="IPR047865">
    <property type="entry name" value="Ribosomal_uL10_bac_type"/>
</dbReference>
<dbReference type="InterPro" id="IPR002363">
    <property type="entry name" value="Ribosomal_uL10_CS_bac"/>
</dbReference>
<dbReference type="NCBIfam" id="NF000955">
    <property type="entry name" value="PRK00099.1-1"/>
    <property type="match status" value="1"/>
</dbReference>
<dbReference type="PANTHER" id="PTHR11560">
    <property type="entry name" value="39S RIBOSOMAL PROTEIN L10, MITOCHONDRIAL"/>
    <property type="match status" value="1"/>
</dbReference>
<dbReference type="Pfam" id="PF00466">
    <property type="entry name" value="Ribosomal_L10"/>
    <property type="match status" value="1"/>
</dbReference>
<dbReference type="SUPFAM" id="SSF160369">
    <property type="entry name" value="Ribosomal protein L10-like"/>
    <property type="match status" value="1"/>
</dbReference>
<dbReference type="PROSITE" id="PS01109">
    <property type="entry name" value="RIBOSOMAL_L10"/>
    <property type="match status" value="1"/>
</dbReference>
<protein>
    <recommendedName>
        <fullName evidence="1">Large ribosomal subunit protein uL10</fullName>
    </recommendedName>
    <alternativeName>
        <fullName evidence="2">50S ribosomal protein L10</fullName>
    </alternativeName>
</protein>
<accession>A1S209</accession>
<keyword id="KW-1185">Reference proteome</keyword>
<keyword id="KW-0687">Ribonucleoprotein</keyword>
<keyword id="KW-0689">Ribosomal protein</keyword>
<keyword id="KW-0694">RNA-binding</keyword>
<keyword id="KW-0699">rRNA-binding</keyword>
<name>RL10_SHEAM</name>
<feature type="chain" id="PRO_1000005588" description="Large ribosomal subunit protein uL10">
    <location>
        <begin position="1"/>
        <end position="166"/>
    </location>
</feature>
<evidence type="ECO:0000255" key="1">
    <source>
        <dbReference type="HAMAP-Rule" id="MF_00362"/>
    </source>
</evidence>
<evidence type="ECO:0000305" key="2"/>
<reference key="1">
    <citation type="submission" date="2006-12" db="EMBL/GenBank/DDBJ databases">
        <title>Complete sequence of Shewanella amazonensis SB2B.</title>
        <authorList>
            <consortium name="US DOE Joint Genome Institute"/>
            <person name="Copeland A."/>
            <person name="Lucas S."/>
            <person name="Lapidus A."/>
            <person name="Barry K."/>
            <person name="Detter J.C."/>
            <person name="Glavina del Rio T."/>
            <person name="Hammon N."/>
            <person name="Israni S."/>
            <person name="Dalin E."/>
            <person name="Tice H."/>
            <person name="Pitluck S."/>
            <person name="Munk A.C."/>
            <person name="Brettin T."/>
            <person name="Bruce D."/>
            <person name="Han C."/>
            <person name="Tapia R."/>
            <person name="Gilna P."/>
            <person name="Schmutz J."/>
            <person name="Larimer F."/>
            <person name="Land M."/>
            <person name="Hauser L."/>
            <person name="Kyrpides N."/>
            <person name="Mikhailova N."/>
            <person name="Fredrickson J."/>
            <person name="Richardson P."/>
        </authorList>
    </citation>
    <scope>NUCLEOTIDE SEQUENCE [LARGE SCALE GENOMIC DNA]</scope>
    <source>
        <strain>ATCC BAA-1098 / SB2B</strain>
    </source>
</reference>
<sequence length="166" mass="17829">MALRLEDKKAIVAEVNEAAKGALSAVVADSRGVTVGAMTTLRKTARANGVYVRVVRNTLARRAVEGTAFECLNEVFTGPTLIAFSNEHPGAAARLLKDFAKEQAKFEVKGAAFEGNFIPAADIDRLAKLPTYEEALAQLMMTMKEASAGKFVRTLAALRDQKQEAA</sequence>